<evidence type="ECO:0000255" key="1"/>
<evidence type="ECO:0000255" key="2">
    <source>
        <dbReference type="HAMAP-Rule" id="MF_04131"/>
    </source>
</evidence>
<evidence type="ECO:0000305" key="3"/>
<accession>Q08779</accession>
<keyword id="KW-0024">Alternative initiation</keyword>
<keyword id="KW-0106">Calcium</keyword>
<keyword id="KW-0167">Capsid protein</keyword>
<keyword id="KW-1015">Disulfide bond</keyword>
<keyword id="KW-0325">Glycoprotein</keyword>
<keyword id="KW-1038">Host endoplasmic reticulum</keyword>
<keyword id="KW-0945">Host-virus interaction</keyword>
<keyword id="KW-0479">Metal-binding</keyword>
<keyword id="KW-1152">Outer capsid protein</keyword>
<keyword id="KW-0732">Signal</keyword>
<keyword id="KW-1146">T=13 icosahedral capsid protein</keyword>
<keyword id="KW-0946">Virion</keyword>
<feature type="signal peptide" evidence="2">
    <location>
        <begin position="1"/>
        <end position="50"/>
    </location>
</feature>
<feature type="chain" id="PRO_0000149603" description="Outer capsid glycoprotein VP7" evidence="2">
    <location>
        <begin position="51"/>
        <end position="326"/>
    </location>
</feature>
<feature type="region of interest" description="CNP motif; interaction with ITGAV/ITGB3" evidence="2">
    <location>
        <begin position="165"/>
        <end position="167"/>
    </location>
</feature>
<feature type="region of interest" description="LVD motif; interaction with ITGA4/ITGB1 heterodimer" evidence="2">
    <location>
        <begin position="237"/>
        <end position="239"/>
    </location>
</feature>
<feature type="region of interest" description="GPR motif; interaction with ITGAX/ITGB2" evidence="2">
    <location>
        <begin position="253"/>
        <end position="255"/>
    </location>
</feature>
<feature type="binding site" evidence="2">
    <location>
        <position position="95"/>
    </location>
    <ligand>
        <name>Ca(2+)</name>
        <dbReference type="ChEBI" id="CHEBI:29108"/>
        <label>1</label>
    </ligand>
</feature>
<feature type="binding site" evidence="2">
    <location>
        <position position="177"/>
    </location>
    <ligand>
        <name>Ca(2+)</name>
        <dbReference type="ChEBI" id="CHEBI:29108"/>
        <label>2</label>
    </ligand>
</feature>
<feature type="binding site" evidence="2">
    <location>
        <position position="206"/>
    </location>
    <ligand>
        <name>Ca(2+)</name>
        <dbReference type="ChEBI" id="CHEBI:29108"/>
        <label>1</label>
    </ligand>
</feature>
<feature type="binding site" evidence="2">
    <location>
        <position position="214"/>
    </location>
    <ligand>
        <name>Ca(2+)</name>
        <dbReference type="ChEBI" id="CHEBI:29108"/>
        <label>1</label>
    </ligand>
</feature>
<feature type="binding site" evidence="2">
    <location>
        <position position="216"/>
    </location>
    <ligand>
        <name>Ca(2+)</name>
        <dbReference type="ChEBI" id="CHEBI:29108"/>
        <label>1</label>
    </ligand>
</feature>
<feature type="binding site" evidence="2">
    <location>
        <position position="228"/>
    </location>
    <ligand>
        <name>Ca(2+)</name>
        <dbReference type="ChEBI" id="CHEBI:29108"/>
        <label>2</label>
    </ligand>
</feature>
<feature type="binding site" evidence="2">
    <location>
        <position position="229"/>
    </location>
    <ligand>
        <name>Ca(2+)</name>
        <dbReference type="ChEBI" id="CHEBI:29108"/>
        <label>2</label>
    </ligand>
</feature>
<feature type="binding site" evidence="2">
    <location>
        <position position="231"/>
    </location>
    <ligand>
        <name>Ca(2+)</name>
        <dbReference type="ChEBI" id="CHEBI:29108"/>
        <label>2</label>
    </ligand>
</feature>
<feature type="binding site" evidence="2">
    <location>
        <position position="301"/>
    </location>
    <ligand>
        <name>Ca(2+)</name>
        <dbReference type="ChEBI" id="CHEBI:29108"/>
        <label>2</label>
    </ligand>
</feature>
<feature type="glycosylation site" description="N-linked (GlcNAc...) asparagine; by host" evidence="1">
    <location>
        <position position="69"/>
    </location>
</feature>
<feature type="glycosylation site" description="N-linked (GlcNAc...) asparagine; by host" evidence="1">
    <location>
        <position position="145"/>
    </location>
</feature>
<feature type="disulfide bond" evidence="2">
    <location>
        <begin position="82"/>
        <end position="135"/>
    </location>
</feature>
<feature type="disulfide bond" evidence="2">
    <location>
        <begin position="165"/>
        <end position="249"/>
    </location>
</feature>
<feature type="disulfide bond" evidence="2">
    <location>
        <begin position="191"/>
        <end position="244"/>
    </location>
</feature>
<feature type="disulfide bond" evidence="2">
    <location>
        <begin position="196"/>
        <end position="207"/>
    </location>
</feature>
<feature type="splice variant" id="VSP_038598" description="In isoform 2." evidence="3">
    <location>
        <begin position="1"/>
        <end position="29"/>
    </location>
</feature>
<comment type="function">
    <text evidence="2">Calcium-binding protein that interacts with rotavirus cell receptors once the initial attachment by VP4 has been achieved. Rotavirus attachment and entry into the host cell probably involves multiple sequential contacts between the outer capsid proteins VP4 and VP7, and the cell receptors. Following entry into the host cell, low intracellular or intravesicular Ca(2+) concentration probably causes the calcium-stabilized VP7 trimers to dissociate from the virion. This step is probably necessary for the membrane-disrupting entry step and the release of VP4, which is locked onto the virion by VP7.</text>
</comment>
<comment type="subunit">
    <text evidence="2">Homotrimer; disulfide-linked. 2 Ca(2+) ions bound at each subunit interface in the trimer hold the trimer together. Interacts with the intermediate capsid protein VP6. Interacts with the outer capsid protein VP5*.</text>
</comment>
<comment type="subcellular location">
    <subcellularLocation>
        <location evidence="2">Virion</location>
    </subcellularLocation>
    <subcellularLocation>
        <location evidence="2">Host endoplasmic reticulum lumen</location>
    </subcellularLocation>
    <text evidence="2">The outer layer contains 780 copies of VP7, grouped as 260 trimers. Immature double-layered particles assembled in the cytoplasm bud across the membrane of the endoplasmic reticulum, acquiring during this process a transient lipid membrane that is modified with the ER resident viral glycoproteins NSP4 and VP7; these enveloped particles also contain VP4. As the particles move towards the interior of the ER cisternae, the transient lipid membrane and the non-structural protein NSP4 are lost, while the virus surface proteins VP4 and VP7 rearrange to form the outermost virus protein layer, yielding mature infectious triple-layered particles.</text>
</comment>
<comment type="alternative products">
    <event type="alternative initiation"/>
    <isoform>
        <id>Q08779-1</id>
        <name>1</name>
        <sequence type="displayed"/>
    </isoform>
    <isoform>
        <id>Q08779-2</id>
        <name>2</name>
        <sequence type="described" ref="VSP_038598"/>
    </isoform>
</comment>
<comment type="PTM">
    <text evidence="2">N-glycosylated.</text>
</comment>
<comment type="PTM">
    <text evidence="2">The N-terminus is blocked possibly by pyroglutamic acid.</text>
</comment>
<comment type="miscellaneous">
    <text evidence="2">Some rotavirus strains are neuraminidase-sensitive and require sialic acid to attach to the cell surface. Some rotavirus strains are integrin-dependent. Some rotavirus strains depend on ganglioside for their entry into the host cell. Hsp70 also seems to be involved in the entry of some strains.</text>
</comment>
<comment type="miscellaneous">
    <text evidence="2">In group A rotaviruses, VP7 defines the G serotype.</text>
</comment>
<comment type="miscellaneous">
    <molecule>Isoform 2</molecule>
    <text evidence="3">Produced by alternative initiation at Met-30 of isoform 1.</text>
</comment>
<comment type="similarity">
    <text evidence="2">Belongs to the rotavirus VP7 family.</text>
</comment>
<organismHost>
    <name type="scientific">Homo sapiens</name>
    <name type="common">Human</name>
    <dbReference type="NCBI Taxonomy" id="9606"/>
</organismHost>
<protein>
    <recommendedName>
        <fullName evidence="2">Outer capsid glycoprotein VP7</fullName>
    </recommendedName>
</protein>
<proteinExistence type="inferred from homology"/>
<sequence>MYGIEYTTFLIYLISIILFNYILKSITRMMDYIIYKFLLIVTIASIFISAQNYGINLPITGSMDVAYVNTTKDKPFLTSTLCLYYPTEARTEINDNEWTSTLSQLFLTKGWPTGSIYFKEYDDIATFSVDPQLYCDYNIVLMRYNSSLELDMSELANLILNEWLCNPMDVTLYYYQQTDEANKWIAMGQSCTIKVCPLNTQTLGIGCQTTNTRTFEEVATAEKLVITDVVDGVNHKLDVTTTTCTIRNCKKLGPRENVAVIQVGGADILDITSDPTTTPQTERMMRINWKKWWQVFYTIVDYVNQIVQAMSKRSRSLDSAAFYYRV</sequence>
<organism>
    <name type="scientific">Rotavirus A (isolate RVA/Human/Thailand/Mc35/1992/G10P11[14])</name>
    <name type="common">RV-A</name>
    <dbReference type="NCBI Taxonomy" id="37136"/>
    <lineage>
        <taxon>Viruses</taxon>
        <taxon>Riboviria</taxon>
        <taxon>Orthornavirae</taxon>
        <taxon>Duplornaviricota</taxon>
        <taxon>Resentoviricetes</taxon>
        <taxon>Reovirales</taxon>
        <taxon>Sedoreoviridae</taxon>
        <taxon>Rotavirus</taxon>
        <taxon>Rotavirus A</taxon>
    </lineage>
</organism>
<reference key="1">
    <citation type="journal article" date="1993" name="Virology">
        <title>Nucleotide sequence of VP4 and VP7 genes of a unique human rotavirus strain Mc35 with subgroup I and serotype 10 specificity.</title>
        <authorList>
            <person name="Urasawa T."/>
            <person name="Taniguchi K."/>
            <person name="Kobayashi N."/>
            <person name="Mise K."/>
            <person name="Hasegawa A."/>
            <person name="Yamaji Y."/>
            <person name="Urasawa S."/>
        </authorList>
    </citation>
    <scope>NUCLEOTIDE SEQUENCE [GENOMIC RNA]</scope>
</reference>
<dbReference type="EMBL" id="D14033">
    <property type="protein sequence ID" value="BAA03122.1"/>
    <property type="molecule type" value="Genomic_RNA"/>
</dbReference>
<dbReference type="SMR" id="Q08779"/>
<dbReference type="GO" id="GO:0044166">
    <property type="term" value="C:host cell endoplasmic reticulum lumen"/>
    <property type="evidence" value="ECO:0007669"/>
    <property type="project" value="UniProtKB-SubCell"/>
</dbReference>
<dbReference type="GO" id="GO:0039621">
    <property type="term" value="C:T=13 icosahedral viral capsid"/>
    <property type="evidence" value="ECO:0007669"/>
    <property type="project" value="UniProtKB-UniRule"/>
</dbReference>
<dbReference type="GO" id="GO:0039624">
    <property type="term" value="C:viral outer capsid"/>
    <property type="evidence" value="ECO:0007669"/>
    <property type="project" value="UniProtKB-UniRule"/>
</dbReference>
<dbReference type="GO" id="GO:0046872">
    <property type="term" value="F:metal ion binding"/>
    <property type="evidence" value="ECO:0007669"/>
    <property type="project" value="UniProtKB-KW"/>
</dbReference>
<dbReference type="Gene3D" id="3.40.50.11130">
    <property type="entry name" value="Glycoprotein VP7, domain 1"/>
    <property type="match status" value="1"/>
</dbReference>
<dbReference type="Gene3D" id="2.60.120.800">
    <property type="entry name" value="Rotavirus outer-layer protein VP7, domain 2"/>
    <property type="match status" value="1"/>
</dbReference>
<dbReference type="HAMAP" id="MF_04130">
    <property type="entry name" value="Rota_VP7"/>
    <property type="match status" value="1"/>
</dbReference>
<dbReference type="HAMAP" id="MF_04131">
    <property type="entry name" value="Rota_VP7_A"/>
    <property type="match status" value="1"/>
</dbReference>
<dbReference type="InterPro" id="IPR001963">
    <property type="entry name" value="VP7"/>
</dbReference>
<dbReference type="InterPro" id="IPR042207">
    <property type="entry name" value="VP7_1"/>
</dbReference>
<dbReference type="InterPro" id="IPR042210">
    <property type="entry name" value="VP7_2"/>
</dbReference>
<dbReference type="Pfam" id="PF00434">
    <property type="entry name" value="VP7"/>
    <property type="match status" value="1"/>
</dbReference>
<name>VP7_ROTHQ</name>